<protein>
    <recommendedName>
        <fullName evidence="1">Phosphoglycerate kinase</fullName>
        <ecNumber evidence="1">2.7.2.3</ecNumber>
    </recommendedName>
</protein>
<sequence length="400" mass="42797">MAKLIVSDLDVKDKKVLIRVDFNVPIKDGKIGDDNRIVAALPTIKYVIEHDGKAILFSHLGRIKSEDDKKGLSLRPVAERLSNLLNKPVTFVPVTEGEQLETAINNMNDGDVLVVENTRFEDVVNGEQVKRESGNDPELGKYWASLGDVYVNDAFGTAHRSHASNVGIASNMDQVAAGFLMEKEIKFLGDAVDNPKHPFVAILGGAKVSDKIGVIDHLISKADKIIIGGGMTYTFYAAKGMGIGNSLVEKDKIELAKSIIEKAGDKLVLPSDSIVAEKFDNDVPSKVVEGSIPDGYMALDIGPKSIEEFEDVLRDAKTVVWNGPMGVFEMSNYAKGTLEIGKFLGTLSDATTIVGGGDSTAAVKQLGVGDKLTHISTGGGASLEYLEGKELPGIAAISEK</sequence>
<dbReference type="EC" id="2.7.2.3" evidence="1"/>
<dbReference type="EMBL" id="AL935263">
    <property type="protein sequence ID" value="CCC78250.1"/>
    <property type="molecule type" value="Genomic_DNA"/>
</dbReference>
<dbReference type="RefSeq" id="WP_003641045.1">
    <property type="nucleotide sequence ID" value="NC_004567.2"/>
</dbReference>
<dbReference type="RefSeq" id="YP_004888764.1">
    <property type="nucleotide sequence ID" value="NC_004567.2"/>
</dbReference>
<dbReference type="SMR" id="Q88YH5"/>
<dbReference type="STRING" id="220668.lp_0790"/>
<dbReference type="EnsemblBacteria" id="CCC78250">
    <property type="protein sequence ID" value="CCC78250"/>
    <property type="gene ID" value="lp_0790"/>
</dbReference>
<dbReference type="KEGG" id="lpl:lp_0790"/>
<dbReference type="PATRIC" id="fig|220668.9.peg.667"/>
<dbReference type="eggNOG" id="COG0126">
    <property type="taxonomic scope" value="Bacteria"/>
</dbReference>
<dbReference type="HOGENOM" id="CLU_025427_0_2_9"/>
<dbReference type="OrthoDB" id="9808460at2"/>
<dbReference type="PhylomeDB" id="Q88YH5"/>
<dbReference type="UniPathway" id="UPA00109">
    <property type="reaction ID" value="UER00185"/>
</dbReference>
<dbReference type="Proteomes" id="UP000000432">
    <property type="component" value="Chromosome"/>
</dbReference>
<dbReference type="GO" id="GO:0005829">
    <property type="term" value="C:cytosol"/>
    <property type="evidence" value="ECO:0007669"/>
    <property type="project" value="TreeGrafter"/>
</dbReference>
<dbReference type="GO" id="GO:0043531">
    <property type="term" value="F:ADP binding"/>
    <property type="evidence" value="ECO:0007669"/>
    <property type="project" value="TreeGrafter"/>
</dbReference>
<dbReference type="GO" id="GO:0005524">
    <property type="term" value="F:ATP binding"/>
    <property type="evidence" value="ECO:0007669"/>
    <property type="project" value="UniProtKB-KW"/>
</dbReference>
<dbReference type="GO" id="GO:0004618">
    <property type="term" value="F:phosphoglycerate kinase activity"/>
    <property type="evidence" value="ECO:0007669"/>
    <property type="project" value="UniProtKB-UniRule"/>
</dbReference>
<dbReference type="GO" id="GO:0006094">
    <property type="term" value="P:gluconeogenesis"/>
    <property type="evidence" value="ECO:0007669"/>
    <property type="project" value="TreeGrafter"/>
</dbReference>
<dbReference type="GO" id="GO:0006096">
    <property type="term" value="P:glycolytic process"/>
    <property type="evidence" value="ECO:0007669"/>
    <property type="project" value="UniProtKB-UniRule"/>
</dbReference>
<dbReference type="CDD" id="cd00318">
    <property type="entry name" value="Phosphoglycerate_kinase"/>
    <property type="match status" value="1"/>
</dbReference>
<dbReference type="FunFam" id="3.40.50.1260:FF:000007">
    <property type="entry name" value="Phosphoglycerate kinase"/>
    <property type="match status" value="1"/>
</dbReference>
<dbReference type="FunFam" id="3.40.50.1260:FF:000008">
    <property type="entry name" value="Phosphoglycerate kinase"/>
    <property type="match status" value="1"/>
</dbReference>
<dbReference type="Gene3D" id="3.40.50.1260">
    <property type="entry name" value="Phosphoglycerate kinase, N-terminal domain"/>
    <property type="match status" value="2"/>
</dbReference>
<dbReference type="HAMAP" id="MF_00145">
    <property type="entry name" value="Phosphoglyc_kinase"/>
    <property type="match status" value="1"/>
</dbReference>
<dbReference type="InterPro" id="IPR001576">
    <property type="entry name" value="Phosphoglycerate_kinase"/>
</dbReference>
<dbReference type="InterPro" id="IPR015911">
    <property type="entry name" value="Phosphoglycerate_kinase_CS"/>
</dbReference>
<dbReference type="InterPro" id="IPR015824">
    <property type="entry name" value="Phosphoglycerate_kinase_N"/>
</dbReference>
<dbReference type="InterPro" id="IPR036043">
    <property type="entry name" value="Phosphoglycerate_kinase_sf"/>
</dbReference>
<dbReference type="PANTHER" id="PTHR11406">
    <property type="entry name" value="PHOSPHOGLYCERATE KINASE"/>
    <property type="match status" value="1"/>
</dbReference>
<dbReference type="PANTHER" id="PTHR11406:SF23">
    <property type="entry name" value="PHOSPHOGLYCERATE KINASE 1, CHLOROPLASTIC-RELATED"/>
    <property type="match status" value="1"/>
</dbReference>
<dbReference type="Pfam" id="PF00162">
    <property type="entry name" value="PGK"/>
    <property type="match status" value="1"/>
</dbReference>
<dbReference type="PIRSF" id="PIRSF000724">
    <property type="entry name" value="Pgk"/>
    <property type="match status" value="1"/>
</dbReference>
<dbReference type="PRINTS" id="PR00477">
    <property type="entry name" value="PHGLYCKINASE"/>
</dbReference>
<dbReference type="SUPFAM" id="SSF53748">
    <property type="entry name" value="Phosphoglycerate kinase"/>
    <property type="match status" value="1"/>
</dbReference>
<dbReference type="PROSITE" id="PS00111">
    <property type="entry name" value="PGLYCERATE_KINASE"/>
    <property type="match status" value="1"/>
</dbReference>
<keyword id="KW-0067">ATP-binding</keyword>
<keyword id="KW-0963">Cytoplasm</keyword>
<keyword id="KW-0324">Glycolysis</keyword>
<keyword id="KW-0418">Kinase</keyword>
<keyword id="KW-0547">Nucleotide-binding</keyword>
<keyword id="KW-1185">Reference proteome</keyword>
<keyword id="KW-0808">Transferase</keyword>
<gene>
    <name evidence="1" type="primary">pgk</name>
    <name type="ordered locus">lp_0790</name>
</gene>
<feature type="chain" id="PRO_0000145956" description="Phosphoglycerate kinase">
    <location>
        <begin position="1"/>
        <end position="400"/>
    </location>
</feature>
<feature type="binding site" evidence="1">
    <location>
        <begin position="21"/>
        <end position="23"/>
    </location>
    <ligand>
        <name>substrate</name>
    </ligand>
</feature>
<feature type="binding site" evidence="1">
    <location>
        <position position="36"/>
    </location>
    <ligand>
        <name>substrate</name>
    </ligand>
</feature>
<feature type="binding site" evidence="1">
    <location>
        <begin position="59"/>
        <end position="62"/>
    </location>
    <ligand>
        <name>substrate</name>
    </ligand>
</feature>
<feature type="binding site" evidence="1">
    <location>
        <position position="119"/>
    </location>
    <ligand>
        <name>substrate</name>
    </ligand>
</feature>
<feature type="binding site" evidence="1">
    <location>
        <position position="160"/>
    </location>
    <ligand>
        <name>substrate</name>
    </ligand>
</feature>
<feature type="binding site" evidence="1">
    <location>
        <position position="211"/>
    </location>
    <ligand>
        <name>ATP</name>
        <dbReference type="ChEBI" id="CHEBI:30616"/>
    </ligand>
</feature>
<feature type="binding site" evidence="1">
    <location>
        <position position="329"/>
    </location>
    <ligand>
        <name>ATP</name>
        <dbReference type="ChEBI" id="CHEBI:30616"/>
    </ligand>
</feature>
<feature type="binding site" evidence="1">
    <location>
        <begin position="356"/>
        <end position="359"/>
    </location>
    <ligand>
        <name>ATP</name>
        <dbReference type="ChEBI" id="CHEBI:30616"/>
    </ligand>
</feature>
<name>PGK_LACPL</name>
<organism>
    <name type="scientific">Lactiplantibacillus plantarum (strain ATCC BAA-793 / NCIMB 8826 / WCFS1)</name>
    <name type="common">Lactobacillus plantarum</name>
    <dbReference type="NCBI Taxonomy" id="220668"/>
    <lineage>
        <taxon>Bacteria</taxon>
        <taxon>Bacillati</taxon>
        <taxon>Bacillota</taxon>
        <taxon>Bacilli</taxon>
        <taxon>Lactobacillales</taxon>
        <taxon>Lactobacillaceae</taxon>
        <taxon>Lactiplantibacillus</taxon>
    </lineage>
</organism>
<evidence type="ECO:0000255" key="1">
    <source>
        <dbReference type="HAMAP-Rule" id="MF_00145"/>
    </source>
</evidence>
<comment type="catalytic activity">
    <reaction evidence="1">
        <text>(2R)-3-phosphoglycerate + ATP = (2R)-3-phospho-glyceroyl phosphate + ADP</text>
        <dbReference type="Rhea" id="RHEA:14801"/>
        <dbReference type="ChEBI" id="CHEBI:30616"/>
        <dbReference type="ChEBI" id="CHEBI:57604"/>
        <dbReference type="ChEBI" id="CHEBI:58272"/>
        <dbReference type="ChEBI" id="CHEBI:456216"/>
        <dbReference type="EC" id="2.7.2.3"/>
    </reaction>
</comment>
<comment type="pathway">
    <text evidence="1">Carbohydrate degradation; glycolysis; pyruvate from D-glyceraldehyde 3-phosphate: step 2/5.</text>
</comment>
<comment type="subunit">
    <text evidence="1">Monomer.</text>
</comment>
<comment type="subcellular location">
    <subcellularLocation>
        <location evidence="1">Cytoplasm</location>
    </subcellularLocation>
</comment>
<comment type="similarity">
    <text evidence="1">Belongs to the phosphoglycerate kinase family.</text>
</comment>
<reference key="1">
    <citation type="journal article" date="2003" name="Proc. Natl. Acad. Sci. U.S.A.">
        <title>Complete genome sequence of Lactobacillus plantarum WCFS1.</title>
        <authorList>
            <person name="Kleerebezem M."/>
            <person name="Boekhorst J."/>
            <person name="van Kranenburg R."/>
            <person name="Molenaar D."/>
            <person name="Kuipers O.P."/>
            <person name="Leer R."/>
            <person name="Tarchini R."/>
            <person name="Peters S.A."/>
            <person name="Sandbrink H.M."/>
            <person name="Fiers M.W.E.J."/>
            <person name="Stiekema W."/>
            <person name="Klein Lankhorst R.M."/>
            <person name="Bron P.A."/>
            <person name="Hoffer S.M."/>
            <person name="Nierop Groot M.N."/>
            <person name="Kerkhoven R."/>
            <person name="De Vries M."/>
            <person name="Ursing B."/>
            <person name="De Vos W.M."/>
            <person name="Siezen R.J."/>
        </authorList>
    </citation>
    <scope>NUCLEOTIDE SEQUENCE [LARGE SCALE GENOMIC DNA]</scope>
    <source>
        <strain>ATCC BAA-793 / NCIMB 8826 / WCFS1</strain>
    </source>
</reference>
<reference key="2">
    <citation type="journal article" date="2012" name="J. Bacteriol.">
        <title>Complete resequencing and reannotation of the Lactobacillus plantarum WCFS1 genome.</title>
        <authorList>
            <person name="Siezen R.J."/>
            <person name="Francke C."/>
            <person name="Renckens B."/>
            <person name="Boekhorst J."/>
            <person name="Wels M."/>
            <person name="Kleerebezem M."/>
            <person name="van Hijum S.A."/>
        </authorList>
    </citation>
    <scope>NUCLEOTIDE SEQUENCE [LARGE SCALE GENOMIC DNA]</scope>
    <scope>GENOME REANNOTATION</scope>
    <source>
        <strain>ATCC BAA-793 / NCIMB 8826 / WCFS1</strain>
    </source>
</reference>
<proteinExistence type="inferred from homology"/>
<accession>Q88YH5</accession>
<accession>F9UM11</accession>